<dbReference type="EMBL" id="FM200053">
    <property type="protein sequence ID" value="CAR60591.1"/>
    <property type="molecule type" value="Genomic_DNA"/>
</dbReference>
<dbReference type="RefSeq" id="WP_000256453.1">
    <property type="nucleotide sequence ID" value="NC_011147.1"/>
</dbReference>
<dbReference type="SMR" id="B5BE94"/>
<dbReference type="KEGG" id="sek:SSPA2360"/>
<dbReference type="HOGENOM" id="CLU_100590_5_1_6"/>
<dbReference type="Proteomes" id="UP000001869">
    <property type="component" value="Chromosome"/>
</dbReference>
<dbReference type="GO" id="GO:0005737">
    <property type="term" value="C:cytoplasm"/>
    <property type="evidence" value="ECO:0007669"/>
    <property type="project" value="UniProtKB-ARBA"/>
</dbReference>
<dbReference type="GO" id="GO:0015935">
    <property type="term" value="C:small ribosomal subunit"/>
    <property type="evidence" value="ECO:0007669"/>
    <property type="project" value="TreeGrafter"/>
</dbReference>
<dbReference type="GO" id="GO:0003735">
    <property type="term" value="F:structural constituent of ribosome"/>
    <property type="evidence" value="ECO:0007669"/>
    <property type="project" value="InterPro"/>
</dbReference>
<dbReference type="GO" id="GO:0006412">
    <property type="term" value="P:translation"/>
    <property type="evidence" value="ECO:0007669"/>
    <property type="project" value="UniProtKB-UniRule"/>
</dbReference>
<dbReference type="FunFam" id="3.30.1320.10:FF:000001">
    <property type="entry name" value="30S ribosomal protein S16"/>
    <property type="match status" value="1"/>
</dbReference>
<dbReference type="Gene3D" id="3.30.1320.10">
    <property type="match status" value="1"/>
</dbReference>
<dbReference type="HAMAP" id="MF_00385">
    <property type="entry name" value="Ribosomal_bS16"/>
    <property type="match status" value="1"/>
</dbReference>
<dbReference type="InterPro" id="IPR000307">
    <property type="entry name" value="Ribosomal_bS16"/>
</dbReference>
<dbReference type="InterPro" id="IPR020592">
    <property type="entry name" value="Ribosomal_bS16_CS"/>
</dbReference>
<dbReference type="InterPro" id="IPR023803">
    <property type="entry name" value="Ribosomal_bS16_dom_sf"/>
</dbReference>
<dbReference type="NCBIfam" id="TIGR00002">
    <property type="entry name" value="S16"/>
    <property type="match status" value="1"/>
</dbReference>
<dbReference type="PANTHER" id="PTHR12919">
    <property type="entry name" value="30S RIBOSOMAL PROTEIN S16"/>
    <property type="match status" value="1"/>
</dbReference>
<dbReference type="PANTHER" id="PTHR12919:SF20">
    <property type="entry name" value="SMALL RIBOSOMAL SUBUNIT PROTEIN BS16M"/>
    <property type="match status" value="1"/>
</dbReference>
<dbReference type="Pfam" id="PF00886">
    <property type="entry name" value="Ribosomal_S16"/>
    <property type="match status" value="1"/>
</dbReference>
<dbReference type="SUPFAM" id="SSF54565">
    <property type="entry name" value="Ribosomal protein S16"/>
    <property type="match status" value="1"/>
</dbReference>
<dbReference type="PROSITE" id="PS00732">
    <property type="entry name" value="RIBOSOMAL_S16"/>
    <property type="match status" value="1"/>
</dbReference>
<proteinExistence type="inferred from homology"/>
<gene>
    <name evidence="1" type="primary">rpsP</name>
    <name type="ordered locus">SSPA2360</name>
</gene>
<accession>B5BE94</accession>
<keyword id="KW-0687">Ribonucleoprotein</keyword>
<keyword id="KW-0689">Ribosomal protein</keyword>
<feature type="chain" id="PRO_1000196471" description="Small ribosomal subunit protein bS16">
    <location>
        <begin position="1"/>
        <end position="82"/>
    </location>
</feature>
<organism>
    <name type="scientific">Salmonella paratyphi A (strain AKU_12601)</name>
    <dbReference type="NCBI Taxonomy" id="554290"/>
    <lineage>
        <taxon>Bacteria</taxon>
        <taxon>Pseudomonadati</taxon>
        <taxon>Pseudomonadota</taxon>
        <taxon>Gammaproteobacteria</taxon>
        <taxon>Enterobacterales</taxon>
        <taxon>Enterobacteriaceae</taxon>
        <taxon>Salmonella</taxon>
    </lineage>
</organism>
<reference key="1">
    <citation type="journal article" date="2009" name="BMC Genomics">
        <title>Pseudogene accumulation in the evolutionary histories of Salmonella enterica serovars Paratyphi A and Typhi.</title>
        <authorList>
            <person name="Holt K.E."/>
            <person name="Thomson N.R."/>
            <person name="Wain J."/>
            <person name="Langridge G.C."/>
            <person name="Hasan R."/>
            <person name="Bhutta Z.A."/>
            <person name="Quail M.A."/>
            <person name="Norbertczak H."/>
            <person name="Walker D."/>
            <person name="Simmonds M."/>
            <person name="White B."/>
            <person name="Bason N."/>
            <person name="Mungall K."/>
            <person name="Dougan G."/>
            <person name="Parkhill J."/>
        </authorList>
    </citation>
    <scope>NUCLEOTIDE SEQUENCE [LARGE SCALE GENOMIC DNA]</scope>
    <source>
        <strain>AKU_12601</strain>
    </source>
</reference>
<name>RS16_SALPK</name>
<protein>
    <recommendedName>
        <fullName evidence="1">Small ribosomal subunit protein bS16</fullName>
    </recommendedName>
    <alternativeName>
        <fullName evidence="2">30S ribosomal protein S16</fullName>
    </alternativeName>
</protein>
<sequence>MVTIRLARHGAKKRPFYQVVVTDSRNARNGRFIERVGFFNPIASEKEEGTRLDLDRIAHWVGQGATISDRVAALIKEVKKAA</sequence>
<evidence type="ECO:0000255" key="1">
    <source>
        <dbReference type="HAMAP-Rule" id="MF_00385"/>
    </source>
</evidence>
<evidence type="ECO:0000305" key="2"/>
<comment type="similarity">
    <text evidence="1">Belongs to the bacterial ribosomal protein bS16 family.</text>
</comment>